<accession>Q9JKP5</accession>
<keyword id="KW-0963">Cytoplasm</keyword>
<keyword id="KW-0903">Direct protein sequencing</keyword>
<keyword id="KW-0479">Metal-binding</keyword>
<keyword id="KW-0507">mRNA processing</keyword>
<keyword id="KW-0508">mRNA splicing</keyword>
<keyword id="KW-0539">Nucleus</keyword>
<keyword id="KW-0597">Phosphoprotein</keyword>
<keyword id="KW-1185">Reference proteome</keyword>
<keyword id="KW-0677">Repeat</keyword>
<keyword id="KW-0694">RNA-binding</keyword>
<keyword id="KW-0862">Zinc</keyword>
<keyword id="KW-0863">Zinc-finger</keyword>
<organism>
    <name type="scientific">Mus musculus</name>
    <name type="common">Mouse</name>
    <dbReference type="NCBI Taxonomy" id="10090"/>
    <lineage>
        <taxon>Eukaryota</taxon>
        <taxon>Metazoa</taxon>
        <taxon>Chordata</taxon>
        <taxon>Craniata</taxon>
        <taxon>Vertebrata</taxon>
        <taxon>Euteleostomi</taxon>
        <taxon>Mammalia</taxon>
        <taxon>Eutheria</taxon>
        <taxon>Euarchontoglires</taxon>
        <taxon>Glires</taxon>
        <taxon>Rodentia</taxon>
        <taxon>Myomorpha</taxon>
        <taxon>Muroidea</taxon>
        <taxon>Muridae</taxon>
        <taxon>Murinae</taxon>
        <taxon>Mus</taxon>
        <taxon>Mus</taxon>
    </lineage>
</organism>
<reference key="1">
    <citation type="submission" date="2000-02" db="EMBL/GenBank/DDBJ databases">
        <title>cDNA cloning of mouse muscleblind.</title>
        <authorList>
            <person name="Castagnola P."/>
            <person name="Monticone M."/>
            <person name="Borsani G."/>
            <person name="Bassi M.T."/>
            <person name="Tonachini L."/>
        </authorList>
    </citation>
    <scope>NUCLEOTIDE SEQUENCE [MRNA]</scope>
</reference>
<reference key="2">
    <citation type="submission" date="2009-01" db="UniProtKB">
        <authorList>
            <person name="Lubec G."/>
            <person name="Sunyer B."/>
            <person name="Chen W.-Q."/>
        </authorList>
    </citation>
    <scope>PROTEIN SEQUENCE OF 2-9</scope>
    <scope>IDENTIFICATION BY MASS SPECTROMETRY</scope>
    <source>
        <strain>OF1</strain>
        <tissue>Hippocampus</tissue>
    </source>
</reference>
<reference key="3">
    <citation type="journal article" date="2000" name="EMBO J.">
        <title>Recruitment of human muscleblind proteins to (CUG)(n) expansions associated with myotonic dystrophy.</title>
        <authorList>
            <person name="Miller J.W."/>
            <person name="Urbinati C.R."/>
            <person name="Teng-Umnuay P."/>
            <person name="Stenberg M.G."/>
            <person name="Byrne B.J."/>
            <person name="Thornton C.A."/>
            <person name="Swanson M.S."/>
        </authorList>
    </citation>
    <scope>TISSUE SPECIFICITY</scope>
</reference>
<reference key="4">
    <citation type="journal article" date="2010" name="Cell">
        <title>A tissue-specific atlas of mouse protein phosphorylation and expression.</title>
        <authorList>
            <person name="Huttlin E.L."/>
            <person name="Jedrychowski M.P."/>
            <person name="Elias J.E."/>
            <person name="Goswami T."/>
            <person name="Rad R."/>
            <person name="Beausoleil S.A."/>
            <person name="Villen J."/>
            <person name="Haas W."/>
            <person name="Sowa M.E."/>
            <person name="Gygi S.P."/>
        </authorList>
    </citation>
    <scope>IDENTIFICATION BY MASS SPECTROMETRY [LARGE SCALE ANALYSIS]</scope>
    <source>
        <tissue>Lung</tissue>
        <tissue>Spleen</tissue>
    </source>
</reference>
<gene>
    <name type="primary">Mbnl1</name>
    <name type="synonym">Exp</name>
    <name type="synonym">Mbnl</name>
</gene>
<dbReference type="EMBL" id="AF231110">
    <property type="protein sequence ID" value="AAF72159.1"/>
    <property type="molecule type" value="mRNA"/>
</dbReference>
<dbReference type="CCDS" id="CCDS79917.1"/>
<dbReference type="RefSeq" id="NP_001240637.1">
    <property type="nucleotide sequence ID" value="NM_001253708.2"/>
</dbReference>
<dbReference type="RefSeq" id="XP_036019077.1">
    <property type="nucleotide sequence ID" value="XM_036163184.1"/>
</dbReference>
<dbReference type="SMR" id="Q9JKP5"/>
<dbReference type="BioGRID" id="208165">
    <property type="interactions" value="4"/>
</dbReference>
<dbReference type="FunCoup" id="Q9JKP5">
    <property type="interactions" value="3566"/>
</dbReference>
<dbReference type="STRING" id="10090.ENSMUSP00000096686"/>
<dbReference type="GlyGen" id="Q9JKP5">
    <property type="glycosylation" value="1 site, 1 O-linked glycan (1 site)"/>
</dbReference>
<dbReference type="iPTMnet" id="Q9JKP5"/>
<dbReference type="PhosphoSitePlus" id="Q9JKP5"/>
<dbReference type="jPOST" id="Q9JKP5"/>
<dbReference type="PaxDb" id="10090-ENSMUSP00000096686"/>
<dbReference type="ProteomicsDB" id="295805"/>
<dbReference type="Pumba" id="Q9JKP5"/>
<dbReference type="Antibodypedia" id="4292">
    <property type="antibodies" value="350 antibodies from 33 providers"/>
</dbReference>
<dbReference type="DNASU" id="56758"/>
<dbReference type="Ensembl" id="ENSMUST00000192607.6">
    <property type="protein sequence ID" value="ENSMUSP00000142095.2"/>
    <property type="gene ID" value="ENSMUSG00000027763.14"/>
</dbReference>
<dbReference type="GeneID" id="56758"/>
<dbReference type="KEGG" id="mmu:56758"/>
<dbReference type="UCSC" id="uc008pjf.1">
    <property type="organism name" value="mouse"/>
</dbReference>
<dbReference type="AGR" id="MGI:1928482"/>
<dbReference type="CTD" id="4154"/>
<dbReference type="MGI" id="MGI:1928482">
    <property type="gene designation" value="Mbnl1"/>
</dbReference>
<dbReference type="VEuPathDB" id="HostDB:ENSMUSG00000027763"/>
<dbReference type="eggNOG" id="KOG2494">
    <property type="taxonomic scope" value="Eukaryota"/>
</dbReference>
<dbReference type="GeneTree" id="ENSGT00950000182897"/>
<dbReference type="InParanoid" id="Q9JKP5"/>
<dbReference type="PhylomeDB" id="Q9JKP5"/>
<dbReference type="BioGRID-ORCS" id="56758">
    <property type="hits" value="9 hits in 77 CRISPR screens"/>
</dbReference>
<dbReference type="ChiTaRS" id="Mbnl1">
    <property type="organism name" value="mouse"/>
</dbReference>
<dbReference type="PRO" id="PR:Q9JKP5"/>
<dbReference type="Proteomes" id="UP000000589">
    <property type="component" value="Chromosome 3"/>
</dbReference>
<dbReference type="RNAct" id="Q9JKP5">
    <property type="molecule type" value="protein"/>
</dbReference>
<dbReference type="Bgee" id="ENSMUSG00000027763">
    <property type="expression patterns" value="Expressed in aorta tunica media and 263 other cell types or tissues"/>
</dbReference>
<dbReference type="ExpressionAtlas" id="Q9JKP5">
    <property type="expression patterns" value="baseline and differential"/>
</dbReference>
<dbReference type="GO" id="GO:0005737">
    <property type="term" value="C:cytoplasm"/>
    <property type="evidence" value="ECO:0000314"/>
    <property type="project" value="MGI"/>
</dbReference>
<dbReference type="GO" id="GO:0010494">
    <property type="term" value="C:cytoplasmic stress granule"/>
    <property type="evidence" value="ECO:0000250"/>
    <property type="project" value="UniProtKB"/>
</dbReference>
<dbReference type="GO" id="GO:0005634">
    <property type="term" value="C:nucleus"/>
    <property type="evidence" value="ECO:0000314"/>
    <property type="project" value="MGI"/>
</dbReference>
<dbReference type="GO" id="GO:0003725">
    <property type="term" value="F:double-stranded RNA binding"/>
    <property type="evidence" value="ECO:0000250"/>
    <property type="project" value="UniProtKB"/>
</dbReference>
<dbReference type="GO" id="GO:0003723">
    <property type="term" value="F:RNA binding"/>
    <property type="evidence" value="ECO:0000250"/>
    <property type="project" value="UniProtKB"/>
</dbReference>
<dbReference type="GO" id="GO:0008270">
    <property type="term" value="F:zinc ion binding"/>
    <property type="evidence" value="ECO:0007669"/>
    <property type="project" value="UniProtKB-KW"/>
</dbReference>
<dbReference type="GO" id="GO:0000380">
    <property type="term" value="P:alternative mRNA splicing, via spliceosome"/>
    <property type="evidence" value="ECO:0000315"/>
    <property type="project" value="MGI"/>
</dbReference>
<dbReference type="GO" id="GO:0030326">
    <property type="term" value="P:embryonic limb morphogenesis"/>
    <property type="evidence" value="ECO:0000270"/>
    <property type="project" value="UniProtKB"/>
</dbReference>
<dbReference type="GO" id="GO:0001701">
    <property type="term" value="P:in utero embryonic development"/>
    <property type="evidence" value="ECO:0000270"/>
    <property type="project" value="UniProtKB"/>
</dbReference>
<dbReference type="GO" id="GO:0006376">
    <property type="term" value="P:mRNA splice site recognition"/>
    <property type="evidence" value="ECO:0000315"/>
    <property type="project" value="MGI"/>
</dbReference>
<dbReference type="GO" id="GO:0045445">
    <property type="term" value="P:myoblast differentiation"/>
    <property type="evidence" value="ECO:0000314"/>
    <property type="project" value="UniProtKB"/>
</dbReference>
<dbReference type="GO" id="GO:0007399">
    <property type="term" value="P:nervous system development"/>
    <property type="evidence" value="ECO:0000270"/>
    <property type="project" value="UniProtKB"/>
</dbReference>
<dbReference type="GO" id="GO:0043484">
    <property type="term" value="P:regulation of RNA splicing"/>
    <property type="evidence" value="ECO:0000250"/>
    <property type="project" value="UniProtKB"/>
</dbReference>
<dbReference type="GO" id="GO:0008380">
    <property type="term" value="P:RNA splicing"/>
    <property type="evidence" value="ECO:0000250"/>
    <property type="project" value="UniProtKB"/>
</dbReference>
<dbReference type="GO" id="GO:0007519">
    <property type="term" value="P:skeletal muscle tissue development"/>
    <property type="evidence" value="ECO:0000315"/>
    <property type="project" value="MGI"/>
</dbReference>
<dbReference type="FunFam" id="3.30.1370.210:FF:000004">
    <property type="entry name" value="Muscleblind like splicing regulator 1"/>
    <property type="match status" value="1"/>
</dbReference>
<dbReference type="FunFam" id="3.30.1370.210:FF:000002">
    <property type="entry name" value="Muscleblind-like 1 isoform 2"/>
    <property type="match status" value="1"/>
</dbReference>
<dbReference type="Gene3D" id="3.30.1370.210">
    <property type="match status" value="2"/>
</dbReference>
<dbReference type="InterPro" id="IPR054429">
    <property type="entry name" value="Znf-CCCH_Muscleblind-like"/>
</dbReference>
<dbReference type="InterPro" id="IPR000571">
    <property type="entry name" value="Znf_CCCH"/>
</dbReference>
<dbReference type="PANTHER" id="PTHR12675">
    <property type="entry name" value="MUSCLEBLIND-LIKE PROTEIN"/>
    <property type="match status" value="1"/>
</dbReference>
<dbReference type="PANTHER" id="PTHR12675:SF7">
    <property type="entry name" value="MUSCLEBLIND-LIKE PROTEIN 1"/>
    <property type="match status" value="1"/>
</dbReference>
<dbReference type="Pfam" id="PF00642">
    <property type="entry name" value="zf-CCCH"/>
    <property type="match status" value="1"/>
</dbReference>
<dbReference type="Pfam" id="PF22628">
    <property type="entry name" value="zf-CCCH_10"/>
    <property type="match status" value="2"/>
</dbReference>
<dbReference type="Pfam" id="PF14608">
    <property type="entry name" value="zf-CCCH_2"/>
    <property type="match status" value="1"/>
</dbReference>
<dbReference type="SMART" id="SM00356">
    <property type="entry name" value="ZnF_C3H1"/>
    <property type="match status" value="4"/>
</dbReference>
<dbReference type="PROSITE" id="PS50103">
    <property type="entry name" value="ZF_C3H1"/>
    <property type="match status" value="4"/>
</dbReference>
<proteinExistence type="evidence at protein level"/>
<feature type="chain" id="PRO_0000089179" description="Muscleblind-like protein 1">
    <location>
        <begin position="1"/>
        <end position="341"/>
    </location>
</feature>
<feature type="zinc finger region" description="C3H1-type 1" evidence="3">
    <location>
        <begin position="13"/>
        <end position="41"/>
    </location>
</feature>
<feature type="zinc finger region" description="C3H1-type 2" evidence="3">
    <location>
        <begin position="47"/>
        <end position="73"/>
    </location>
</feature>
<feature type="zinc finger region" description="C3H1-type 3" evidence="3">
    <location>
        <begin position="178"/>
        <end position="206"/>
    </location>
</feature>
<feature type="zinc finger region" description="C3H1-type 4" evidence="3">
    <location>
        <begin position="214"/>
        <end position="240"/>
    </location>
</feature>
<feature type="modified residue" description="Phosphothreonine" evidence="2">
    <location>
        <position position="6"/>
    </location>
</feature>
<evidence type="ECO:0000250" key="1">
    <source>
        <dbReference type="UniProtKB" id="A0A8I6B1J2"/>
    </source>
</evidence>
<evidence type="ECO:0000250" key="2">
    <source>
        <dbReference type="UniProtKB" id="Q9NR56"/>
    </source>
</evidence>
<evidence type="ECO:0000255" key="3">
    <source>
        <dbReference type="PROSITE-ProRule" id="PRU00723"/>
    </source>
</evidence>
<evidence type="ECO:0000269" key="4">
    <source>
    </source>
</evidence>
<evidence type="ECO:0000305" key="5"/>
<sequence length="341" mass="36976">MAVSVTPIRDTKWLTLEVCREFQRGTCSRPDTECKFAHPSKSCQVENGRVIACFDSLKGRCSRENCKYLHPPPHLKTQLEINGRNNLIQQKNMAMLAQQMQLANAMMPGAPLQPVPMFSVAPSLATSASAAFNPYLGPVSPSLVPAEILPTAPMLVTGNPGVPVPAAAAAAAQKLMRTDRLEVCREYQRGNCNRGENDCRFAHPADSTMIDTNDNTVTVCMDYIKGRCSREKCKYFHPPAHLQAKIKAAQYQVNQAAAAQAAATAAAMGIPQAVLPPLPKRPALEKTNGATAVFNTGIFQYQQALANMQLQQHTAFLPPGSILCMTPATSVDTHNICRTSD</sequence>
<comment type="function">
    <text evidence="1 2">Mediates pre-mRNA alternative splicing regulation. Acts either as activator or repressor of splicing on specific pre-mRNA targets. Inhibits cardiac troponin-T (TNNT2) pre-mRNA exon inclusion but induces insulin receptor (IR) pre-mRNA exon inclusion in muscle. Antagonizes the alternative splicing activity pattern of CELF proteins. Regulates the TNNT2 exon 5 skipping through competition with U2AF2. Inhibits the formation of the spliceosome A complex on intron 4 of TNNT2 pre-mRNA. Binds to the stem-loop structure within the polypyrimidine tract of TNNT2 intron 4 during spliceosome assembly. Binds to the 5'-YGCU(U/G)Y-3'consensus sequence. Binds to the IR RNA. Binds to CUG triplet repeat expansion in myotonic dystrophy muscle cells by sequestering the target RNAs (By similarity). Together with RNA binding proteins RBPMS and RBFOX2, activates vascular smooth muscle cells alternative splicing events (By similarity). Regulates NCOR2 alternative splicing (By similarity).</text>
</comment>
<comment type="subunit">
    <text evidence="2">Interacts with DDX1 and YBX1. Interacts with HNRNPH1; the interaction in RNA-independent (By similarity). Interacts with RBPMS; the interaction allows cooperative assembly of RNA-bound stable cell-specific alternative splicing regulatory complexes (By similarity).</text>
</comment>
<comment type="subcellular location">
    <subcellularLocation>
        <location evidence="2">Nucleus</location>
    </subcellularLocation>
    <subcellularLocation>
        <location evidence="2">Cytoplasm</location>
    </subcellularLocation>
    <subcellularLocation>
        <location evidence="2">Cytoplasmic granule</location>
    </subcellularLocation>
    <text evidence="2">Localized with DDX1, TIAL1 and YBX1 in stress granules upon stress. Localized in the cytoplasm of multinucleated myotubes.</text>
</comment>
<comment type="tissue specificity">
    <text evidence="4">Highly expressed in cardiac and skeletal muscle. Weakly expressed in heart and eye (at protein level).</text>
</comment>
<comment type="similarity">
    <text evidence="5">Belongs to the muscleblind family.</text>
</comment>
<name>MBNL1_MOUSE</name>
<protein>
    <recommendedName>
        <fullName>Muscleblind-like protein 1</fullName>
    </recommendedName>
    <alternativeName>
        <fullName>Triplet-expansion RNA-binding protein</fullName>
    </alternativeName>
</protein>